<keyword id="KW-0040">ANK repeat</keyword>
<keyword id="KW-1185">Reference proteome</keyword>
<keyword id="KW-0677">Repeat</keyword>
<reference key="1">
    <citation type="journal article" date="2004" name="Science">
        <title>The 1.2-megabase genome sequence of Mimivirus.</title>
        <authorList>
            <person name="Raoult D."/>
            <person name="Audic S."/>
            <person name="Robert C."/>
            <person name="Abergel C."/>
            <person name="Renesto P."/>
            <person name="Ogata H."/>
            <person name="La Scola B."/>
            <person name="Susan M."/>
            <person name="Claverie J.-M."/>
        </authorList>
    </citation>
    <scope>NUCLEOTIDE SEQUENCE [LARGE SCALE GENOMIC DNA]</scope>
    <source>
        <strain>Rowbotham-Bradford</strain>
    </source>
</reference>
<feature type="chain" id="PRO_0000067142" description="Putative ankyrin repeat protein L59">
    <location>
        <begin position="1"/>
        <end position="307"/>
    </location>
</feature>
<feature type="repeat" description="ANK 1">
    <location>
        <begin position="41"/>
        <end position="67"/>
    </location>
</feature>
<feature type="repeat" description="ANK 2">
    <location>
        <begin position="68"/>
        <end position="97"/>
    </location>
</feature>
<feature type="repeat" description="ANK 3">
    <location>
        <begin position="98"/>
        <end position="127"/>
    </location>
</feature>
<feature type="repeat" description="ANK 4">
    <location>
        <begin position="129"/>
        <end position="157"/>
    </location>
</feature>
<feature type="repeat" description="ANK 5">
    <location>
        <begin position="158"/>
        <end position="187"/>
    </location>
</feature>
<feature type="repeat" description="ANK 6">
    <location>
        <begin position="188"/>
        <end position="217"/>
    </location>
</feature>
<feature type="repeat" description="ANK 7">
    <location>
        <begin position="219"/>
        <end position="247"/>
    </location>
</feature>
<feature type="repeat" description="ANK 8">
    <location>
        <begin position="248"/>
        <end position="277"/>
    </location>
</feature>
<feature type="repeat" description="ANK 9">
    <location>
        <begin position="279"/>
        <end position="307"/>
    </location>
</feature>
<organismHost>
    <name type="scientific">Acanthamoeba polyphaga</name>
    <name type="common">Amoeba</name>
    <dbReference type="NCBI Taxonomy" id="5757"/>
</organismHost>
<gene>
    <name type="ordered locus">MIMI_L59</name>
</gene>
<dbReference type="EMBL" id="AY653733">
    <property type="protein sequence ID" value="AAV50334.1"/>
    <property type="molecule type" value="Genomic_DNA"/>
</dbReference>
<dbReference type="SMR" id="Q5UPD5"/>
<dbReference type="KEGG" id="vg:9924647"/>
<dbReference type="OrthoDB" id="38654at10239"/>
<dbReference type="Proteomes" id="UP000001134">
    <property type="component" value="Genome"/>
</dbReference>
<dbReference type="Gene3D" id="1.25.40.20">
    <property type="entry name" value="Ankyrin repeat-containing domain"/>
    <property type="match status" value="3"/>
</dbReference>
<dbReference type="InterPro" id="IPR002110">
    <property type="entry name" value="Ankyrin_rpt"/>
</dbReference>
<dbReference type="InterPro" id="IPR036770">
    <property type="entry name" value="Ankyrin_rpt-contain_sf"/>
</dbReference>
<dbReference type="PANTHER" id="PTHR24171:SF10">
    <property type="entry name" value="ANKYRIN REPEAT DOMAIN-CONTAINING PROTEIN 29-LIKE"/>
    <property type="match status" value="1"/>
</dbReference>
<dbReference type="PANTHER" id="PTHR24171">
    <property type="entry name" value="ANKYRIN REPEAT DOMAIN-CONTAINING PROTEIN 39-RELATED"/>
    <property type="match status" value="1"/>
</dbReference>
<dbReference type="Pfam" id="PF00023">
    <property type="entry name" value="Ank"/>
    <property type="match status" value="1"/>
</dbReference>
<dbReference type="Pfam" id="PF12796">
    <property type="entry name" value="Ank_2"/>
    <property type="match status" value="2"/>
</dbReference>
<dbReference type="SMART" id="SM00248">
    <property type="entry name" value="ANK"/>
    <property type="match status" value="8"/>
</dbReference>
<dbReference type="SUPFAM" id="SSF48403">
    <property type="entry name" value="Ankyrin repeat"/>
    <property type="match status" value="1"/>
</dbReference>
<dbReference type="PROSITE" id="PS50297">
    <property type="entry name" value="ANK_REP_REGION"/>
    <property type="match status" value="1"/>
</dbReference>
<dbReference type="PROSITE" id="PS50088">
    <property type="entry name" value="ANK_REPEAT"/>
    <property type="match status" value="4"/>
</dbReference>
<proteinExistence type="predicted"/>
<protein>
    <recommendedName>
        <fullName>Putative ankyrin repeat protein L59</fullName>
    </recommendedName>
</protein>
<organism>
    <name type="scientific">Acanthamoeba polyphaga mimivirus</name>
    <name type="common">APMV</name>
    <dbReference type="NCBI Taxonomy" id="212035"/>
    <lineage>
        <taxon>Viruses</taxon>
        <taxon>Varidnaviria</taxon>
        <taxon>Bamfordvirae</taxon>
        <taxon>Nucleocytoviricota</taxon>
        <taxon>Megaviricetes</taxon>
        <taxon>Imitervirales</taxon>
        <taxon>Mimiviridae</taxon>
        <taxon>Megamimivirinae</taxon>
        <taxon>Mimivirus</taxon>
        <taxon>Mimivirus bradfordmassiliense</taxon>
    </lineage>
</organism>
<accession>Q5UPD5</accession>
<name>YL059_MIMIV</name>
<sequence length="307" mass="35252">MELSQYHQILSLLNNFSNKDKISVIECLDSISELRKQMSVLFNKLLKVALKNRNLPMVKFVCDNLEKIDNKAITLAAKYNCLEILKYLHEKGLDTTNHNYSALSWAARNNDFKMVEYLQHQGSDIRANDDEALRWAALSGCLEMVEYLQTQGCDVRNRNDFAIKYAARNGHFKLVRYLHSQGSDIRTDDDYALRWAARNGHLEIVKYLHSKGCNIHAYGDSAIKWASMGGYLEIVEYLHGVGCDIRIDNDYPIRWAASNGHLEVVEYLFSQGCDIGADNNYALMWAKKNGHDDVVEYIVLLKLLKLY</sequence>